<comment type="function">
    <text evidence="4">Cleaves C-terminal arginine or lysine residues from biologically active peptides such as kinins or anaphylatoxins in the circulation thereby regulating their activities. Down-regulates fibrinolysis by removing C-terminal lysine residues from fibrin that has already been partially degraded by plasmin.</text>
</comment>
<comment type="catalytic activity">
    <reaction evidence="4">
        <text>Release of C-terminal Arg and Lys from a polypeptide.</text>
        <dbReference type="EC" id="3.4.17.20"/>
    </reaction>
</comment>
<comment type="cofactor">
    <cofactor evidence="9 12">
        <name>Zn(2+)</name>
        <dbReference type="ChEBI" id="CHEBI:29105"/>
    </cofactor>
    <text evidence="9 12">Binds 1 zinc ion per subunit.</text>
</comment>
<comment type="activity regulation">
    <text evidence="9">TAFI/CPB2 is unique among carboxypeptidases in that it spontaneously inactivates with a short half-life, a property that is crucial for its role in controlling blood clot lysis. The zymogen is stabilized by interactions with the activation peptide. Release of the activation peptide increases a dynamic flap mobility and in time this leads to conformational changes that disrupt the catalytic site and expose a cryptic thrombin-cleavage site present at Arg-324.</text>
</comment>
<comment type="subcellular location">
    <subcellularLocation>
        <location>Secreted</location>
    </subcellularLocation>
</comment>
<comment type="alternative products">
    <event type="alternative splicing"/>
    <isoform>
        <id>Q96IY4-1</id>
        <name>1</name>
        <sequence type="displayed"/>
    </isoform>
    <isoform>
        <id>Q96IY4-2</id>
        <name>2</name>
        <sequence type="described" ref="VSP_013446 VSP_013447"/>
    </isoform>
</comment>
<comment type="tissue specificity">
    <text>Plasma; synthesized in the liver.</text>
</comment>
<comment type="PTM">
    <text evidence="7 8 9 10 13">N-glycosylated. N-glycan at Asn-108: Hex5HexNAc4.</text>
</comment>
<comment type="similarity">
    <text evidence="17">Belongs to the peptidase M14 family.</text>
</comment>
<name>CBPB2_HUMAN</name>
<accession>Q96IY4</accession>
<accession>A8K464</accession>
<accession>Q15114</accession>
<accession>Q5T9K1</accession>
<accession>Q5T9K2</accession>
<accession>Q9P2Y6</accession>
<reference key="1">
    <citation type="journal article" date="1991" name="J. Biol. Chem.">
        <title>Isolation, molecular cloning, and partial characterization of a novel carboxypeptidase B from human plasma.</title>
        <authorList>
            <person name="Eaton D.L."/>
            <person name="Malloy B.E."/>
            <person name="Tsai S.P."/>
            <person name="Henzel W."/>
            <person name="Drayna D."/>
        </authorList>
    </citation>
    <scope>NUCLEOTIDE SEQUENCE [MRNA] (ISOFORM 1)</scope>
    <scope>PARTIAL PROTEIN SEQUENCE</scope>
    <scope>INTERACTION WITH PLASMINOGEN</scope>
    <scope>VARIANTS THR-169 AND THR-347</scope>
    <source>
        <tissue>Liver</tissue>
    </source>
</reference>
<reference key="2">
    <citation type="submission" date="1998-03" db="EMBL/GenBank/DDBJ databases">
        <title>Isolation, molecular cloning, and partial characterization of a novel carboxypeptidase B from human plasma.</title>
        <authorList>
            <person name="Matsumoto A."/>
        </authorList>
    </citation>
    <scope>NUCLEOTIDE SEQUENCE [MRNA] (ISOFORM 2)</scope>
</reference>
<reference key="3">
    <citation type="submission" date="2003-05" db="EMBL/GenBank/DDBJ databases">
        <title>Cloning of human full-length CDSs in BD Creator(TM) system donor vector.</title>
        <authorList>
            <person name="Kalnine N."/>
            <person name="Chen X."/>
            <person name="Rolfs A."/>
            <person name="Halleck A."/>
            <person name="Hines L."/>
            <person name="Eisenstein S."/>
            <person name="Koundinya M."/>
            <person name="Raphael J."/>
            <person name="Moreira D."/>
            <person name="Kelley T."/>
            <person name="LaBaer J."/>
            <person name="Lin Y."/>
            <person name="Phelan M."/>
            <person name="Farmer A."/>
        </authorList>
    </citation>
    <scope>NUCLEOTIDE SEQUENCE [LARGE SCALE MRNA] (ISOFORM 1)</scope>
    <scope>VARIANT THR-347</scope>
</reference>
<reference key="4">
    <citation type="journal article" date="2004" name="Nat. Genet.">
        <title>Complete sequencing and characterization of 21,243 full-length human cDNAs.</title>
        <authorList>
            <person name="Ota T."/>
            <person name="Suzuki Y."/>
            <person name="Nishikawa T."/>
            <person name="Otsuki T."/>
            <person name="Sugiyama T."/>
            <person name="Irie R."/>
            <person name="Wakamatsu A."/>
            <person name="Hayashi K."/>
            <person name="Sato H."/>
            <person name="Nagai K."/>
            <person name="Kimura K."/>
            <person name="Makita H."/>
            <person name="Sekine M."/>
            <person name="Obayashi M."/>
            <person name="Nishi T."/>
            <person name="Shibahara T."/>
            <person name="Tanaka T."/>
            <person name="Ishii S."/>
            <person name="Yamamoto J."/>
            <person name="Saito K."/>
            <person name="Kawai Y."/>
            <person name="Isono Y."/>
            <person name="Nakamura Y."/>
            <person name="Nagahari K."/>
            <person name="Murakami K."/>
            <person name="Yasuda T."/>
            <person name="Iwayanagi T."/>
            <person name="Wagatsuma M."/>
            <person name="Shiratori A."/>
            <person name="Sudo H."/>
            <person name="Hosoiri T."/>
            <person name="Kaku Y."/>
            <person name="Kodaira H."/>
            <person name="Kondo H."/>
            <person name="Sugawara M."/>
            <person name="Takahashi M."/>
            <person name="Kanda K."/>
            <person name="Yokoi T."/>
            <person name="Furuya T."/>
            <person name="Kikkawa E."/>
            <person name="Omura Y."/>
            <person name="Abe K."/>
            <person name="Kamihara K."/>
            <person name="Katsuta N."/>
            <person name="Sato K."/>
            <person name="Tanikawa M."/>
            <person name="Yamazaki M."/>
            <person name="Ninomiya K."/>
            <person name="Ishibashi T."/>
            <person name="Yamashita H."/>
            <person name="Murakawa K."/>
            <person name="Fujimori K."/>
            <person name="Tanai H."/>
            <person name="Kimata M."/>
            <person name="Watanabe M."/>
            <person name="Hiraoka S."/>
            <person name="Chiba Y."/>
            <person name="Ishida S."/>
            <person name="Ono Y."/>
            <person name="Takiguchi S."/>
            <person name="Watanabe S."/>
            <person name="Yosida M."/>
            <person name="Hotuta T."/>
            <person name="Kusano J."/>
            <person name="Kanehori K."/>
            <person name="Takahashi-Fujii A."/>
            <person name="Hara H."/>
            <person name="Tanase T.-O."/>
            <person name="Nomura Y."/>
            <person name="Togiya S."/>
            <person name="Komai F."/>
            <person name="Hara R."/>
            <person name="Takeuchi K."/>
            <person name="Arita M."/>
            <person name="Imose N."/>
            <person name="Musashino K."/>
            <person name="Yuuki H."/>
            <person name="Oshima A."/>
            <person name="Sasaki N."/>
            <person name="Aotsuka S."/>
            <person name="Yoshikawa Y."/>
            <person name="Matsunawa H."/>
            <person name="Ichihara T."/>
            <person name="Shiohata N."/>
            <person name="Sano S."/>
            <person name="Moriya S."/>
            <person name="Momiyama H."/>
            <person name="Satoh N."/>
            <person name="Takami S."/>
            <person name="Terashima Y."/>
            <person name="Suzuki O."/>
            <person name="Nakagawa S."/>
            <person name="Senoh A."/>
            <person name="Mizoguchi H."/>
            <person name="Goto Y."/>
            <person name="Shimizu F."/>
            <person name="Wakebe H."/>
            <person name="Hishigaki H."/>
            <person name="Watanabe T."/>
            <person name="Sugiyama A."/>
            <person name="Takemoto M."/>
            <person name="Kawakami B."/>
            <person name="Yamazaki M."/>
            <person name="Watanabe K."/>
            <person name="Kumagai A."/>
            <person name="Itakura S."/>
            <person name="Fukuzumi Y."/>
            <person name="Fujimori Y."/>
            <person name="Komiyama M."/>
            <person name="Tashiro H."/>
            <person name="Tanigami A."/>
            <person name="Fujiwara T."/>
            <person name="Ono T."/>
            <person name="Yamada K."/>
            <person name="Fujii Y."/>
            <person name="Ozaki K."/>
            <person name="Hirao M."/>
            <person name="Ohmori Y."/>
            <person name="Kawabata A."/>
            <person name="Hikiji T."/>
            <person name="Kobatake N."/>
            <person name="Inagaki H."/>
            <person name="Ikema Y."/>
            <person name="Okamoto S."/>
            <person name="Okitani R."/>
            <person name="Kawakami T."/>
            <person name="Noguchi S."/>
            <person name="Itoh T."/>
            <person name="Shigeta K."/>
            <person name="Senba T."/>
            <person name="Matsumura K."/>
            <person name="Nakajima Y."/>
            <person name="Mizuno T."/>
            <person name="Morinaga M."/>
            <person name="Sasaki M."/>
            <person name="Togashi T."/>
            <person name="Oyama M."/>
            <person name="Hata H."/>
            <person name="Watanabe M."/>
            <person name="Komatsu T."/>
            <person name="Mizushima-Sugano J."/>
            <person name="Satoh T."/>
            <person name="Shirai Y."/>
            <person name="Takahashi Y."/>
            <person name="Nakagawa K."/>
            <person name="Okumura K."/>
            <person name="Nagase T."/>
            <person name="Nomura N."/>
            <person name="Kikuchi H."/>
            <person name="Masuho Y."/>
            <person name="Yamashita R."/>
            <person name="Nakai K."/>
            <person name="Yada T."/>
            <person name="Nakamura Y."/>
            <person name="Ohara O."/>
            <person name="Isogai T."/>
            <person name="Sugano S."/>
        </authorList>
    </citation>
    <scope>NUCLEOTIDE SEQUENCE [LARGE SCALE MRNA] (ISOFORM 1)</scope>
    <scope>VARIANTS THR-169 AND THR-347</scope>
    <source>
        <tissue>Liver</tissue>
    </source>
</reference>
<reference key="5">
    <citation type="submission" date="2004-08" db="EMBL/GenBank/DDBJ databases">
        <authorList>
            <consortium name="SeattleSNPs variation discovery resource"/>
        </authorList>
    </citation>
    <scope>NUCLEOTIDE SEQUENCE [GENOMIC DNA]</scope>
    <scope>VARIANT THR-347</scope>
</reference>
<reference key="6">
    <citation type="journal article" date="2004" name="Nature">
        <title>The DNA sequence and analysis of human chromosome 13.</title>
        <authorList>
            <person name="Dunham A."/>
            <person name="Matthews L.H."/>
            <person name="Burton J."/>
            <person name="Ashurst J.L."/>
            <person name="Howe K.L."/>
            <person name="Ashcroft K.J."/>
            <person name="Beare D.M."/>
            <person name="Burford D.C."/>
            <person name="Hunt S.E."/>
            <person name="Griffiths-Jones S."/>
            <person name="Jones M.C."/>
            <person name="Keenan S.J."/>
            <person name="Oliver K."/>
            <person name="Scott C.E."/>
            <person name="Ainscough R."/>
            <person name="Almeida J.P."/>
            <person name="Ambrose K.D."/>
            <person name="Andrews D.T."/>
            <person name="Ashwell R.I.S."/>
            <person name="Babbage A.K."/>
            <person name="Bagguley C.L."/>
            <person name="Bailey J."/>
            <person name="Bannerjee R."/>
            <person name="Barlow K.F."/>
            <person name="Bates K."/>
            <person name="Beasley H."/>
            <person name="Bird C.P."/>
            <person name="Bray-Allen S."/>
            <person name="Brown A.J."/>
            <person name="Brown J.Y."/>
            <person name="Burrill W."/>
            <person name="Carder C."/>
            <person name="Carter N.P."/>
            <person name="Chapman J.C."/>
            <person name="Clamp M.E."/>
            <person name="Clark S.Y."/>
            <person name="Clarke G."/>
            <person name="Clee C.M."/>
            <person name="Clegg S.C."/>
            <person name="Cobley V."/>
            <person name="Collins J.E."/>
            <person name="Corby N."/>
            <person name="Coville G.J."/>
            <person name="Deloukas P."/>
            <person name="Dhami P."/>
            <person name="Dunham I."/>
            <person name="Dunn M."/>
            <person name="Earthrowl M.E."/>
            <person name="Ellington A.G."/>
            <person name="Faulkner L."/>
            <person name="Frankish A.G."/>
            <person name="Frankland J."/>
            <person name="French L."/>
            <person name="Garner P."/>
            <person name="Garnett J."/>
            <person name="Gilbert J.G.R."/>
            <person name="Gilson C.J."/>
            <person name="Ghori J."/>
            <person name="Grafham D.V."/>
            <person name="Gribble S.M."/>
            <person name="Griffiths C."/>
            <person name="Hall R.E."/>
            <person name="Hammond S."/>
            <person name="Harley J.L."/>
            <person name="Hart E.A."/>
            <person name="Heath P.D."/>
            <person name="Howden P.J."/>
            <person name="Huckle E.J."/>
            <person name="Hunt P.J."/>
            <person name="Hunt A.R."/>
            <person name="Johnson C."/>
            <person name="Johnson D."/>
            <person name="Kay M."/>
            <person name="Kimberley A.M."/>
            <person name="King A."/>
            <person name="Laird G.K."/>
            <person name="Langford C.J."/>
            <person name="Lawlor S."/>
            <person name="Leongamornlert D.A."/>
            <person name="Lloyd D.M."/>
            <person name="Lloyd C."/>
            <person name="Loveland J.E."/>
            <person name="Lovell J."/>
            <person name="Martin S."/>
            <person name="Mashreghi-Mohammadi M."/>
            <person name="McLaren S.J."/>
            <person name="McMurray A."/>
            <person name="Milne S."/>
            <person name="Moore M.J.F."/>
            <person name="Nickerson T."/>
            <person name="Palmer S.A."/>
            <person name="Pearce A.V."/>
            <person name="Peck A.I."/>
            <person name="Pelan S."/>
            <person name="Phillimore B."/>
            <person name="Porter K.M."/>
            <person name="Rice C.M."/>
            <person name="Searle S."/>
            <person name="Sehra H.K."/>
            <person name="Shownkeen R."/>
            <person name="Skuce C.D."/>
            <person name="Smith M."/>
            <person name="Steward C.A."/>
            <person name="Sycamore N."/>
            <person name="Tester J."/>
            <person name="Thomas D.W."/>
            <person name="Tracey A."/>
            <person name="Tromans A."/>
            <person name="Tubby B."/>
            <person name="Wall M."/>
            <person name="Wallis J.M."/>
            <person name="West A.P."/>
            <person name="Whitehead S.L."/>
            <person name="Willey D.L."/>
            <person name="Wilming L."/>
            <person name="Wray P.W."/>
            <person name="Wright M.W."/>
            <person name="Young L."/>
            <person name="Coulson A."/>
            <person name="Durbin R.M."/>
            <person name="Hubbard T."/>
            <person name="Sulston J.E."/>
            <person name="Beck S."/>
            <person name="Bentley D.R."/>
            <person name="Rogers J."/>
            <person name="Ross M.T."/>
        </authorList>
    </citation>
    <scope>NUCLEOTIDE SEQUENCE [LARGE SCALE GENOMIC DNA]</scope>
</reference>
<reference key="7">
    <citation type="journal article" date="2004" name="Genome Res.">
        <title>The status, quality, and expansion of the NIH full-length cDNA project: the Mammalian Gene Collection (MGC).</title>
        <authorList>
            <consortium name="The MGC Project Team"/>
        </authorList>
    </citation>
    <scope>NUCLEOTIDE SEQUENCE [LARGE SCALE MRNA] (ISOFORM 1)</scope>
    <scope>VARIANT THR-347</scope>
    <source>
        <tissue>Skeletal muscle</tissue>
    </source>
</reference>
<reference key="8">
    <citation type="journal article" date="1999" name="J. Biol. Chem.">
        <title>Characterization of plasmin-mediated activation of plasma procarboxypeptidase B. Modulation by glycosaminoglycans.</title>
        <authorList>
            <person name="Mao S.S."/>
            <person name="Cooper C.M."/>
            <person name="Wood T."/>
            <person name="Shafer J.A."/>
            <person name="Gardell S.J."/>
        </authorList>
    </citation>
    <scope>FUNCTION</scope>
    <scope>CATALYTIC ACTIVITY</scope>
</reference>
<reference key="9">
    <citation type="journal article" date="2005" name="J. Proteome Res.">
        <title>Human plasma N-glycoproteome analysis by immunoaffinity subtraction, hydrazide chemistry, and mass spectrometry.</title>
        <authorList>
            <person name="Liu T."/>
            <person name="Qian W.-J."/>
            <person name="Gritsenko M.A."/>
            <person name="Camp D.G. II"/>
            <person name="Monroe M.E."/>
            <person name="Moore R.J."/>
            <person name="Smith R.D."/>
        </authorList>
    </citation>
    <scope>GLYCOSYLATION [LARGE SCALE ANALYSIS] AT ASN-44; ASN-73 AND ASN-108</scope>
    <source>
        <tissue>Plasma</tissue>
    </source>
</reference>
<reference key="10">
    <citation type="journal article" date="2006" name="Biochemistry">
        <title>Post-translational modifications of human thrombin-activatable fibrinolysis inhibitor (TAFI): evidence for a large shift in the isoelectric point and reduced solubility upon activation.</title>
        <authorList>
            <person name="Valnickova Z."/>
            <person name="Christensen T."/>
            <person name="Skottrup P."/>
            <person name="Thogersen I.B."/>
            <person name="Hojrup P."/>
            <person name="Enghild J.J."/>
        </authorList>
    </citation>
    <scope>GLYCOSYLATION AT ASN-44; ASN-73; ASN-85; ASN-108 AND ASN-241</scope>
    <scope>DISULFIDE BONDS</scope>
</reference>
<reference key="11">
    <citation type="journal article" date="2009" name="J. Proteome Res.">
        <title>Glycoproteomics analysis of human liver tissue by combination of multiple enzyme digestion and hydrazide chemistry.</title>
        <authorList>
            <person name="Chen R."/>
            <person name="Jiang X."/>
            <person name="Sun D."/>
            <person name="Han G."/>
            <person name="Wang F."/>
            <person name="Ye M."/>
            <person name="Wang L."/>
            <person name="Zou H."/>
        </authorList>
    </citation>
    <scope>GLYCOSYLATION [LARGE SCALE ANALYSIS] AT ASN-108</scope>
    <source>
        <tissue>Liver</tissue>
    </source>
</reference>
<reference key="12">
    <citation type="journal article" date="2012" name="Mol. Cell. Proteomics">
        <title>Human urinary glycoproteomics; attachment site specific analysis of N- and O-linked glycosylations by CID and ECD.</title>
        <authorList>
            <person name="Halim A."/>
            <person name="Nilsson J."/>
            <person name="Ruetschi U."/>
            <person name="Hesse C."/>
            <person name="Larson G."/>
        </authorList>
    </citation>
    <scope>GLYCOSYLATION AT ASN-108</scope>
    <scope>STRUCTURE OF CARBOHYDRATES</scope>
    <scope>IDENTIFICATION BY MASS SPECTROMETRY</scope>
</reference>
<reference key="13">
    <citation type="journal article" date="2008" name="Blood">
        <title>Crystal structures of TAFI elucidate the inactivation mechanism of activated TAFI: a novel mechanism for enzyme autoregulation.</title>
        <authorList>
            <person name="Marx P.F."/>
            <person name="Brondijk T.H."/>
            <person name="Plug T."/>
            <person name="Romijn R.A."/>
            <person name="Hemrika W."/>
            <person name="Meijers J.C."/>
            <person name="Huizinga E.G."/>
        </authorList>
    </citation>
    <scope>X-RAY CRYSTALLOGRAPHY (2.8 ANGSTROMS) OF 24-423 ALONE AND IN COMPLEX WITH ZINC IONS AND INHIBITOR</scope>
    <scope>GLYCOSYLATION AT ASN-44; ASN-73; ASN-85 AND ASN-108</scope>
    <scope>ZINC-BINDING SITES</scope>
    <scope>COFACTOR</scope>
    <scope>ACTIVITY REGULATION</scope>
    <scope>DISULFIDE BONDS</scope>
</reference>
<reference key="14">
    <citation type="journal article" date="2010" name="J. Thromb. Haemost.">
        <title>Insights into the molecular inactivation mechanism of human activated thrombin-activatable fibrinolysis inhibitor.</title>
        <authorList>
            <person name="Sanglas L."/>
            <person name="Arolas J.L."/>
            <person name="Valnickova Z."/>
            <person name="Aviles F.X."/>
            <person name="Enghild J.J."/>
            <person name="Gomis-Ruth F.X."/>
        </authorList>
    </citation>
    <scope>X-RAY CRYSTALLOGRAPHY (2.5 ANGSTROMS) OF 115-423 IN COMPLEX WITH ZINC AND INHIBITOR</scope>
    <scope>DISULFIDE BONDS</scope>
    <scope>COFACTOR</scope>
</reference>
<organism>
    <name type="scientific">Homo sapiens</name>
    <name type="common">Human</name>
    <dbReference type="NCBI Taxonomy" id="9606"/>
    <lineage>
        <taxon>Eukaryota</taxon>
        <taxon>Metazoa</taxon>
        <taxon>Chordata</taxon>
        <taxon>Craniata</taxon>
        <taxon>Vertebrata</taxon>
        <taxon>Euteleostomi</taxon>
        <taxon>Mammalia</taxon>
        <taxon>Eutheria</taxon>
        <taxon>Euarchontoglires</taxon>
        <taxon>Primates</taxon>
        <taxon>Haplorrhini</taxon>
        <taxon>Catarrhini</taxon>
        <taxon>Hominidae</taxon>
        <taxon>Homo</taxon>
    </lineage>
</organism>
<keyword id="KW-0002">3D-structure</keyword>
<keyword id="KW-0025">Alternative splicing</keyword>
<keyword id="KW-0094">Blood coagulation</keyword>
<keyword id="KW-0121">Carboxypeptidase</keyword>
<keyword id="KW-0903">Direct protein sequencing</keyword>
<keyword id="KW-1015">Disulfide bond</keyword>
<keyword id="KW-0280">Fibrinolysis</keyword>
<keyword id="KW-0325">Glycoprotein</keyword>
<keyword id="KW-0356">Hemostasis</keyword>
<keyword id="KW-0378">Hydrolase</keyword>
<keyword id="KW-0479">Metal-binding</keyword>
<keyword id="KW-0482">Metalloprotease</keyword>
<keyword id="KW-0645">Protease</keyword>
<keyword id="KW-1267">Proteomics identification</keyword>
<keyword id="KW-1185">Reference proteome</keyword>
<keyword id="KW-0964">Secreted</keyword>
<keyword id="KW-0732">Signal</keyword>
<keyword id="KW-0862">Zinc</keyword>
<keyword id="KW-0865">Zymogen</keyword>
<evidence type="ECO:0000250" key="1">
    <source>
        <dbReference type="UniProtKB" id="P00730"/>
    </source>
</evidence>
<evidence type="ECO:0000255" key="2"/>
<evidence type="ECO:0000255" key="3">
    <source>
        <dbReference type="PROSITE-ProRule" id="PRU01379"/>
    </source>
</evidence>
<evidence type="ECO:0000269" key="4">
    <source>
    </source>
</evidence>
<evidence type="ECO:0000269" key="5">
    <source>
    </source>
</evidence>
<evidence type="ECO:0000269" key="6">
    <source>
    </source>
</evidence>
<evidence type="ECO:0000269" key="7">
    <source>
    </source>
</evidence>
<evidence type="ECO:0000269" key="8">
    <source>
    </source>
</evidence>
<evidence type="ECO:0000269" key="9">
    <source>
    </source>
</evidence>
<evidence type="ECO:0000269" key="10">
    <source>
    </source>
</evidence>
<evidence type="ECO:0000269" key="11">
    <source>
    </source>
</evidence>
<evidence type="ECO:0000269" key="12">
    <source>
    </source>
</evidence>
<evidence type="ECO:0000269" key="13">
    <source>
    </source>
</evidence>
<evidence type="ECO:0000269" key="14">
    <source ref="3"/>
</evidence>
<evidence type="ECO:0000269" key="15">
    <source ref="5"/>
</evidence>
<evidence type="ECO:0000303" key="16">
    <source ref="2"/>
</evidence>
<evidence type="ECO:0000305" key="17"/>
<evidence type="ECO:0007829" key="18">
    <source>
        <dbReference type="PDB" id="3D68"/>
    </source>
</evidence>
<evidence type="ECO:0007829" key="19">
    <source>
        <dbReference type="PDB" id="3LMS"/>
    </source>
</evidence>
<evidence type="ECO:0007829" key="20">
    <source>
        <dbReference type="PDB" id="4P10"/>
    </source>
</evidence>
<evidence type="ECO:0007829" key="21">
    <source>
        <dbReference type="PDB" id="7NEE"/>
    </source>
</evidence>
<proteinExistence type="evidence at protein level"/>
<sequence length="423" mass="48424">MKLCSLAVLVPIVLFCEQHVFAFQSGQVLAALPRTSRQVQVLQNLTTTYEIVLWQPVTADLIVKKKQVHFFVNASDVDNVKAHLNVSGIPCSVLLADVEDLIQQQISNDTVSPRASASYYEQYHSLNEIYSWIEFITERHPDMLTKIHIGSSFEKYPLYVLKVSGKEQAAKNAIWIDCGIHAREWISPAFCLWFIGHITQFYGIIGQYTNLLRLVDFYVMPVVNVDGYDYSWKKNRMWRKNRSFYANNHCIGTDLNRNFASKHWCEEGASSSSCSETYCGLYPESEPEVKAVASFLRRNINQIKAYISMHSYSQHIVFPYSYTRSKSKDHEELSLVASEAVRAIEKISKNTRYTHGHGSETLYLAPGGGDDWIYDLGIKYSFTIELRDTGTYGFLLPERYIKPTCREAFAAVSKIAWHVIRNV</sequence>
<protein>
    <recommendedName>
        <fullName>Carboxypeptidase B2</fullName>
        <ecNumber evidence="4">3.4.17.20</ecNumber>
    </recommendedName>
    <alternativeName>
        <fullName>Carboxypeptidase U</fullName>
        <shortName>CPU</shortName>
    </alternativeName>
    <alternativeName>
        <fullName>Plasma carboxypeptidase B</fullName>
        <shortName>pCPB</shortName>
    </alternativeName>
    <alternativeName>
        <fullName>Thrombin-activable fibrinolysis inhibitor</fullName>
        <shortName>TAFI</shortName>
    </alternativeName>
</protein>
<gene>
    <name type="primary">CPB2</name>
</gene>
<dbReference type="EC" id="3.4.17.20" evidence="4"/>
<dbReference type="EMBL" id="M75106">
    <property type="protein sequence ID" value="AAA60042.1"/>
    <property type="molecule type" value="mRNA"/>
</dbReference>
<dbReference type="EMBL" id="AB011969">
    <property type="protein sequence ID" value="BAA90475.1"/>
    <property type="molecule type" value="mRNA"/>
</dbReference>
<dbReference type="EMBL" id="BT006936">
    <property type="protein sequence ID" value="AAP35582.1"/>
    <property type="molecule type" value="mRNA"/>
</dbReference>
<dbReference type="EMBL" id="AK290829">
    <property type="protein sequence ID" value="BAF83518.1"/>
    <property type="molecule type" value="mRNA"/>
</dbReference>
<dbReference type="EMBL" id="AY714780">
    <property type="protein sequence ID" value="AAT97987.1"/>
    <property type="molecule type" value="Genomic_DNA"/>
</dbReference>
<dbReference type="EMBL" id="AL137141">
    <property type="status" value="NOT_ANNOTATED_CDS"/>
    <property type="molecule type" value="Genomic_DNA"/>
</dbReference>
<dbReference type="EMBL" id="AL157758">
    <property type="status" value="NOT_ANNOTATED_CDS"/>
    <property type="molecule type" value="Genomic_DNA"/>
</dbReference>
<dbReference type="EMBL" id="BC007057">
    <property type="protein sequence ID" value="AAH07057.1"/>
    <property type="molecule type" value="mRNA"/>
</dbReference>
<dbReference type="CCDS" id="CCDS9401.1">
    <molecule id="Q96IY4-1"/>
</dbReference>
<dbReference type="PIR" id="A41204">
    <property type="entry name" value="A41204"/>
</dbReference>
<dbReference type="RefSeq" id="NP_001265470.1">
    <property type="nucleotide sequence ID" value="NM_001278541.1"/>
</dbReference>
<dbReference type="RefSeq" id="NP_001863.3">
    <molecule id="Q96IY4-1"/>
    <property type="nucleotide sequence ID" value="NM_001872.5"/>
</dbReference>
<dbReference type="PDB" id="3D66">
    <property type="method" value="X-ray"/>
    <property type="resolution" value="3.10 A"/>
    <property type="chains" value="A/B/C=24-423"/>
</dbReference>
<dbReference type="PDB" id="3D67">
    <property type="method" value="X-ray"/>
    <property type="resolution" value="3.40 A"/>
    <property type="chains" value="A/B/C=24-423"/>
</dbReference>
<dbReference type="PDB" id="3D68">
    <property type="method" value="X-ray"/>
    <property type="resolution" value="2.80 A"/>
    <property type="chains" value="A/B/C=24-423"/>
</dbReference>
<dbReference type="PDB" id="3LMS">
    <property type="method" value="X-ray"/>
    <property type="resolution" value="2.50 A"/>
    <property type="chains" value="A=115-423"/>
</dbReference>
<dbReference type="PDB" id="4P10">
    <property type="method" value="X-ray"/>
    <property type="resolution" value="2.00 A"/>
    <property type="chains" value="A=23-423"/>
</dbReference>
<dbReference type="PDB" id="5HVF">
    <property type="method" value="X-ray"/>
    <property type="resolution" value="2.85 A"/>
    <property type="chains" value="A=23-423"/>
</dbReference>
<dbReference type="PDB" id="5HVG">
    <property type="method" value="X-ray"/>
    <property type="resolution" value="3.05 A"/>
    <property type="chains" value="A/C=23-423"/>
</dbReference>
<dbReference type="PDB" id="5HVH">
    <property type="method" value="X-ray"/>
    <property type="resolution" value="3.00 A"/>
    <property type="chains" value="A=23-423"/>
</dbReference>
<dbReference type="PDB" id="7NEE">
    <property type="method" value="X-ray"/>
    <property type="resolution" value="2.55 A"/>
    <property type="chains" value="A=24-423"/>
</dbReference>
<dbReference type="PDB" id="7NEU">
    <property type="method" value="X-ray"/>
    <property type="resolution" value="2.80 A"/>
    <property type="chains" value="A=24-423"/>
</dbReference>
<dbReference type="PDBsum" id="3D66"/>
<dbReference type="PDBsum" id="3D67"/>
<dbReference type="PDBsum" id="3D68"/>
<dbReference type="PDBsum" id="3LMS"/>
<dbReference type="PDBsum" id="4P10"/>
<dbReference type="PDBsum" id="5HVF"/>
<dbReference type="PDBsum" id="5HVG"/>
<dbReference type="PDBsum" id="5HVH"/>
<dbReference type="PDBsum" id="7NEE"/>
<dbReference type="PDBsum" id="7NEU"/>
<dbReference type="SMR" id="Q96IY4"/>
<dbReference type="BioGRID" id="107753">
    <property type="interactions" value="7"/>
</dbReference>
<dbReference type="FunCoup" id="Q96IY4">
    <property type="interactions" value="213"/>
</dbReference>
<dbReference type="IntAct" id="Q96IY4">
    <property type="interactions" value="1"/>
</dbReference>
<dbReference type="STRING" id="9606.ENSP00000181383"/>
<dbReference type="BindingDB" id="Q96IY4"/>
<dbReference type="ChEMBL" id="CHEMBL3419"/>
<dbReference type="DrugBank" id="DB04723">
    <property type="generic name" value="2-(3-GUANIDINOPHENYL)-3-MERCAPTOPROPANOIC ACID"/>
</dbReference>
<dbReference type="DrugBank" id="DB05712">
    <property type="generic name" value="AZD-9684"/>
</dbReference>
<dbReference type="DrugBank" id="DB11311">
    <property type="generic name" value="Prothrombin"/>
</dbReference>
<dbReference type="DrugBank" id="DB12099">
    <property type="generic name" value="UK-396,082"/>
</dbReference>
<dbReference type="GuidetoPHARMACOLOGY" id="1594"/>
<dbReference type="MEROPS" id="M14.009"/>
<dbReference type="GlyConnect" id="699">
    <property type="glycosylation" value="16 N-Linked glycans (3 sites)"/>
</dbReference>
<dbReference type="GlyCosmos" id="Q96IY4">
    <property type="glycosylation" value="5 sites, 19 glycans"/>
</dbReference>
<dbReference type="GlyGen" id="Q96IY4">
    <property type="glycosylation" value="5 sites, 38 N-linked glycans (4 sites)"/>
</dbReference>
<dbReference type="iPTMnet" id="Q96IY4"/>
<dbReference type="PhosphoSitePlus" id="Q96IY4"/>
<dbReference type="BioMuta" id="CPB2"/>
<dbReference type="DMDM" id="317373332"/>
<dbReference type="CPTAC" id="CPTAC-657"/>
<dbReference type="CPTAC" id="non-CPTAC-2639"/>
<dbReference type="jPOST" id="Q96IY4"/>
<dbReference type="MassIVE" id="Q96IY4"/>
<dbReference type="PaxDb" id="9606-ENSP00000181383"/>
<dbReference type="PeptideAtlas" id="Q96IY4"/>
<dbReference type="ProteomicsDB" id="76868">
    <molecule id="Q96IY4-1"/>
</dbReference>
<dbReference type="ProteomicsDB" id="76869">
    <molecule id="Q96IY4-2"/>
</dbReference>
<dbReference type="ABCD" id="Q96IY4">
    <property type="antibodies" value="2 sequenced antibodies"/>
</dbReference>
<dbReference type="Antibodypedia" id="1324">
    <property type="antibodies" value="622 antibodies from 35 providers"/>
</dbReference>
<dbReference type="DNASU" id="1361"/>
<dbReference type="Ensembl" id="ENST00000181383.10">
    <molecule id="Q96IY4-1"/>
    <property type="protein sequence ID" value="ENSP00000181383.4"/>
    <property type="gene ID" value="ENSG00000080618.17"/>
</dbReference>
<dbReference type="GeneID" id="1361"/>
<dbReference type="KEGG" id="hsa:1361"/>
<dbReference type="MANE-Select" id="ENST00000181383.10">
    <property type="protein sequence ID" value="ENSP00000181383.4"/>
    <property type="RefSeq nucleotide sequence ID" value="NM_001872.5"/>
    <property type="RefSeq protein sequence ID" value="NP_001863.3"/>
</dbReference>
<dbReference type="UCSC" id="uc001vaw.4">
    <molecule id="Q96IY4-1"/>
    <property type="organism name" value="human"/>
</dbReference>
<dbReference type="AGR" id="HGNC:2300"/>
<dbReference type="CTD" id="1361"/>
<dbReference type="DisGeNET" id="1361"/>
<dbReference type="GeneCards" id="CPB2"/>
<dbReference type="HGNC" id="HGNC:2300">
    <property type="gene designation" value="CPB2"/>
</dbReference>
<dbReference type="HPA" id="ENSG00000080618">
    <property type="expression patterns" value="Tissue enriched (liver)"/>
</dbReference>
<dbReference type="MIM" id="603101">
    <property type="type" value="gene"/>
</dbReference>
<dbReference type="neXtProt" id="NX_Q96IY4"/>
<dbReference type="OpenTargets" id="ENSG00000080618"/>
<dbReference type="PharmGKB" id="PA26822"/>
<dbReference type="VEuPathDB" id="HostDB:ENSG00000080618"/>
<dbReference type="eggNOG" id="KOG2650">
    <property type="taxonomic scope" value="Eukaryota"/>
</dbReference>
<dbReference type="GeneTree" id="ENSGT00940000159160"/>
<dbReference type="HOGENOM" id="CLU_019326_0_0_1"/>
<dbReference type="InParanoid" id="Q96IY4"/>
<dbReference type="OMA" id="IGHITEY"/>
<dbReference type="OrthoDB" id="3626597at2759"/>
<dbReference type="PAN-GO" id="Q96IY4">
    <property type="GO annotations" value="4 GO annotations based on evolutionary models"/>
</dbReference>
<dbReference type="PhylomeDB" id="Q96IY4"/>
<dbReference type="TreeFam" id="TF317197"/>
<dbReference type="BRENDA" id="3.4.17.20">
    <property type="organism ID" value="2681"/>
</dbReference>
<dbReference type="PathwayCommons" id="Q96IY4"/>
<dbReference type="Reactome" id="R-HSA-2022377">
    <property type="pathway name" value="Metabolism of Angiotensinogen to Angiotensins"/>
</dbReference>
<dbReference type="Reactome" id="R-HSA-977606">
    <property type="pathway name" value="Regulation of Complement cascade"/>
</dbReference>
<dbReference type="SignaLink" id="Q96IY4"/>
<dbReference type="BioGRID-ORCS" id="1361">
    <property type="hits" value="10 hits in 1143 CRISPR screens"/>
</dbReference>
<dbReference type="ChiTaRS" id="CPB2">
    <property type="organism name" value="human"/>
</dbReference>
<dbReference type="EvolutionaryTrace" id="Q96IY4"/>
<dbReference type="GeneWiki" id="Carboxypeptidase_B2"/>
<dbReference type="GenomeRNAi" id="1361"/>
<dbReference type="Pharos" id="Q96IY4">
    <property type="development level" value="Tchem"/>
</dbReference>
<dbReference type="PRO" id="PR:Q96IY4"/>
<dbReference type="Proteomes" id="UP000005640">
    <property type="component" value="Chromosome 13"/>
</dbReference>
<dbReference type="RNAct" id="Q96IY4">
    <property type="molecule type" value="protein"/>
</dbReference>
<dbReference type="Bgee" id="ENSG00000080618">
    <property type="expression patterns" value="Expressed in right lobe of liver and 90 other cell types or tissues"/>
</dbReference>
<dbReference type="ExpressionAtlas" id="Q96IY4">
    <property type="expression patterns" value="baseline and differential"/>
</dbReference>
<dbReference type="GO" id="GO:0070062">
    <property type="term" value="C:extracellular exosome"/>
    <property type="evidence" value="ECO:0007005"/>
    <property type="project" value="UniProtKB"/>
</dbReference>
<dbReference type="GO" id="GO:0005576">
    <property type="term" value="C:extracellular region"/>
    <property type="evidence" value="ECO:0000304"/>
    <property type="project" value="Reactome"/>
</dbReference>
<dbReference type="GO" id="GO:0005615">
    <property type="term" value="C:extracellular space"/>
    <property type="evidence" value="ECO:0000318"/>
    <property type="project" value="GO_Central"/>
</dbReference>
<dbReference type="GO" id="GO:0004181">
    <property type="term" value="F:metallocarboxypeptidase activity"/>
    <property type="evidence" value="ECO:0000318"/>
    <property type="project" value="GO_Central"/>
</dbReference>
<dbReference type="GO" id="GO:0008270">
    <property type="term" value="F:zinc ion binding"/>
    <property type="evidence" value="ECO:0007669"/>
    <property type="project" value="InterPro"/>
</dbReference>
<dbReference type="GO" id="GO:0007596">
    <property type="term" value="P:blood coagulation"/>
    <property type="evidence" value="ECO:0007669"/>
    <property type="project" value="UniProtKB-KW"/>
</dbReference>
<dbReference type="GO" id="GO:0042730">
    <property type="term" value="P:fibrinolysis"/>
    <property type="evidence" value="ECO:0000318"/>
    <property type="project" value="GO_Central"/>
</dbReference>
<dbReference type="GO" id="GO:0006508">
    <property type="term" value="P:proteolysis"/>
    <property type="evidence" value="ECO:0000318"/>
    <property type="project" value="GO_Central"/>
</dbReference>
<dbReference type="CDD" id="cd06246">
    <property type="entry name" value="M14_CPB2"/>
    <property type="match status" value="1"/>
</dbReference>
<dbReference type="FunFam" id="3.30.70.340:FF:000003">
    <property type="entry name" value="Carboxypeptidase B2"/>
    <property type="match status" value="1"/>
</dbReference>
<dbReference type="FunFam" id="3.40.630.10:FF:000084">
    <property type="entry name" value="Carboxypeptidase B2"/>
    <property type="match status" value="1"/>
</dbReference>
<dbReference type="Gene3D" id="3.30.70.340">
    <property type="entry name" value="Metallocarboxypeptidase-like"/>
    <property type="match status" value="1"/>
</dbReference>
<dbReference type="Gene3D" id="3.40.630.10">
    <property type="entry name" value="Zn peptidases"/>
    <property type="match status" value="1"/>
</dbReference>
<dbReference type="InterPro" id="IPR033849">
    <property type="entry name" value="CPB2"/>
</dbReference>
<dbReference type="InterPro" id="IPR036990">
    <property type="entry name" value="M14A-like_propep"/>
</dbReference>
<dbReference type="InterPro" id="IPR003146">
    <property type="entry name" value="M14A_act_pep"/>
</dbReference>
<dbReference type="InterPro" id="IPR000834">
    <property type="entry name" value="Peptidase_M14"/>
</dbReference>
<dbReference type="PANTHER" id="PTHR11705:SF17">
    <property type="entry name" value="CARBOXYPEPTIDASE B2"/>
    <property type="match status" value="1"/>
</dbReference>
<dbReference type="PANTHER" id="PTHR11705">
    <property type="entry name" value="PROTEASE FAMILY M14 CARBOXYPEPTIDASE A,B"/>
    <property type="match status" value="1"/>
</dbReference>
<dbReference type="Pfam" id="PF00246">
    <property type="entry name" value="Peptidase_M14"/>
    <property type="match status" value="1"/>
</dbReference>
<dbReference type="Pfam" id="PF02244">
    <property type="entry name" value="Propep_M14"/>
    <property type="match status" value="1"/>
</dbReference>
<dbReference type="PRINTS" id="PR00765">
    <property type="entry name" value="CRBOXYPTASEA"/>
</dbReference>
<dbReference type="SMART" id="SM00631">
    <property type="entry name" value="Zn_pept"/>
    <property type="match status" value="1"/>
</dbReference>
<dbReference type="SUPFAM" id="SSF54897">
    <property type="entry name" value="Protease propeptides/inhibitors"/>
    <property type="match status" value="1"/>
</dbReference>
<dbReference type="SUPFAM" id="SSF53187">
    <property type="entry name" value="Zn-dependent exopeptidases"/>
    <property type="match status" value="1"/>
</dbReference>
<dbReference type="PROSITE" id="PS52035">
    <property type="entry name" value="PEPTIDASE_M14"/>
    <property type="match status" value="1"/>
</dbReference>
<feature type="signal peptide" evidence="2">
    <location>
        <begin position="1"/>
        <end position="22"/>
    </location>
</feature>
<feature type="propeptide" id="PRO_0000004377" description="Activation peptide">
    <location>
        <begin position="23"/>
        <end position="114"/>
    </location>
</feature>
<feature type="chain" id="PRO_0000004378" description="Carboxypeptidase B2">
    <location>
        <begin position="115"/>
        <end position="423"/>
    </location>
</feature>
<feature type="domain" description="Peptidase M14" evidence="3">
    <location>
        <begin position="122"/>
        <end position="419"/>
    </location>
</feature>
<feature type="active site" description="Proton donor/acceptor" evidence="3">
    <location>
        <position position="385"/>
    </location>
</feature>
<feature type="binding site" evidence="1">
    <location>
        <begin position="181"/>
        <end position="184"/>
    </location>
    <ligand>
        <name>substrate</name>
    </ligand>
</feature>
<feature type="binding site" evidence="3 9 12">
    <location>
        <position position="181"/>
    </location>
    <ligand>
        <name>Zn(2+)</name>
        <dbReference type="ChEBI" id="CHEBI:29105"/>
        <note>catalytic</note>
    </ligand>
</feature>
<feature type="binding site" evidence="3 9 12">
    <location>
        <position position="184"/>
    </location>
    <ligand>
        <name>Zn(2+)</name>
        <dbReference type="ChEBI" id="CHEBI:29105"/>
        <note>catalytic</note>
    </ligand>
</feature>
<feature type="binding site" evidence="1">
    <location>
        <position position="239"/>
    </location>
    <ligand>
        <name>substrate</name>
    </ligand>
</feature>
<feature type="binding site" evidence="1">
    <location>
        <begin position="256"/>
        <end position="257"/>
    </location>
    <ligand>
        <name>substrate</name>
    </ligand>
</feature>
<feature type="binding site" evidence="3 9 12">
    <location>
        <position position="310"/>
    </location>
    <ligand>
        <name>Zn(2+)</name>
        <dbReference type="ChEBI" id="CHEBI:29105"/>
        <note>catalytic</note>
    </ligand>
</feature>
<feature type="binding site" evidence="1">
    <location>
        <begin position="311"/>
        <end position="312"/>
    </location>
    <ligand>
        <name>substrate</name>
    </ligand>
</feature>
<feature type="binding site" evidence="1">
    <location>
        <position position="363"/>
    </location>
    <ligand>
        <name>substrate</name>
    </ligand>
</feature>
<feature type="site" description="Cleavage; by thrombin">
    <location>
        <begin position="324"/>
        <end position="325"/>
    </location>
</feature>
<feature type="glycosylation site" description="N-linked (GlcNAc...) asparagine" evidence="7 8 9">
    <location>
        <position position="44"/>
    </location>
</feature>
<feature type="glycosylation site" description="N-linked (GlcNAc...) asparagine" evidence="7 8 9">
    <location>
        <position position="73"/>
    </location>
</feature>
<feature type="glycosylation site" description="N-linked (GlcNAc...) asparagine" evidence="8 9">
    <location>
        <position position="85"/>
    </location>
</feature>
<feature type="glycosylation site" description="N-linked (GlcNAc...) (complex) asparagine" evidence="7 8 9 10 13">
    <location>
        <position position="108"/>
    </location>
</feature>
<feature type="glycosylation site" description="N-linked (GlcNAc...) asparagine; partial" evidence="8">
    <location>
        <position position="241"/>
    </location>
</feature>
<feature type="disulfide bond" evidence="9 12">
    <location>
        <begin position="178"/>
        <end position="191"/>
    </location>
</feature>
<feature type="disulfide bond" evidence="9 12">
    <location>
        <begin position="250"/>
        <end position="274"/>
    </location>
</feature>
<feature type="disulfide bond" evidence="9 12">
    <location>
        <begin position="265"/>
        <end position="279"/>
    </location>
</feature>
<feature type="splice variant" id="VSP_013446" description="In isoform 2." evidence="16">
    <location>
        <begin position="198"/>
        <end position="234"/>
    </location>
</feature>
<feature type="splice variant" id="VSP_013447" description="In isoform 2." evidence="16">
    <original>IELRDTGTYGFLLPERYIKPTCREAFAAVSKIAWHVIRNV</original>
    <variation>SNPPVEKLLPLSLK</variation>
    <location>
        <begin position="384"/>
        <end position="423"/>
    </location>
</feature>
<feature type="sequence variant" id="VAR_032565" description="In dbSNP:rs3742264." evidence="5 11">
    <original>A</original>
    <variation>T</variation>
    <location>
        <position position="169"/>
    </location>
</feature>
<feature type="sequence variant" id="VAR_022258" description="In dbSNP:rs1926447." evidence="5 6 11 14 15">
    <original>I</original>
    <variation>T</variation>
    <location>
        <position position="347"/>
    </location>
</feature>
<feature type="sequence conflict" description="In Ref. 2; BAA90475." evidence="17" ref="2">
    <original>S</original>
    <variation>T</variation>
    <location>
        <position position="25"/>
    </location>
</feature>
<feature type="strand" evidence="20">
    <location>
        <begin position="26"/>
        <end position="31"/>
    </location>
</feature>
<feature type="helix" evidence="20">
    <location>
        <begin position="36"/>
        <end position="48"/>
    </location>
</feature>
<feature type="strand" evidence="20">
    <location>
        <begin position="51"/>
        <end position="58"/>
    </location>
</feature>
<feature type="helix" evidence="20">
    <location>
        <begin position="59"/>
        <end position="61"/>
    </location>
</feature>
<feature type="strand" evidence="20">
    <location>
        <begin position="68"/>
        <end position="73"/>
    </location>
</feature>
<feature type="helix" evidence="20">
    <location>
        <begin position="74"/>
        <end position="76"/>
    </location>
</feature>
<feature type="helix" evidence="20">
    <location>
        <begin position="77"/>
        <end position="87"/>
    </location>
</feature>
<feature type="strand" evidence="20">
    <location>
        <begin position="91"/>
        <end position="96"/>
    </location>
</feature>
<feature type="helix" evidence="20">
    <location>
        <begin position="98"/>
        <end position="107"/>
    </location>
</feature>
<feature type="turn" evidence="20">
    <location>
        <begin position="108"/>
        <end position="110"/>
    </location>
</feature>
<feature type="helix" evidence="20">
    <location>
        <begin position="117"/>
        <end position="121"/>
    </location>
</feature>
<feature type="helix" evidence="20">
    <location>
        <begin position="126"/>
        <end position="139"/>
    </location>
</feature>
<feature type="turn" evidence="20">
    <location>
        <begin position="141"/>
        <end position="143"/>
    </location>
</feature>
<feature type="strand" evidence="20">
    <location>
        <begin position="144"/>
        <end position="151"/>
    </location>
</feature>
<feature type="strand" evidence="20">
    <location>
        <begin position="157"/>
        <end position="163"/>
    </location>
</feature>
<feature type="strand" evidence="21">
    <location>
        <begin position="165"/>
        <end position="167"/>
    </location>
</feature>
<feature type="strand" evidence="20">
    <location>
        <begin position="172"/>
        <end position="177"/>
    </location>
</feature>
<feature type="helix" evidence="20">
    <location>
        <begin position="186"/>
        <end position="201"/>
    </location>
</feature>
<feature type="turn" evidence="20">
    <location>
        <begin position="202"/>
        <end position="204"/>
    </location>
</feature>
<feature type="helix" evidence="20">
    <location>
        <begin position="206"/>
        <end position="214"/>
    </location>
</feature>
<feature type="strand" evidence="20">
    <location>
        <begin position="215"/>
        <end position="221"/>
    </location>
</feature>
<feature type="helix" evidence="20">
    <location>
        <begin position="225"/>
        <end position="233"/>
    </location>
</feature>
<feature type="helix" evidence="20">
    <location>
        <begin position="255"/>
        <end position="257"/>
    </location>
</feature>
<feature type="turn" evidence="20">
    <location>
        <begin position="262"/>
        <end position="265"/>
    </location>
</feature>
<feature type="strand" evidence="20">
    <location>
        <begin position="269"/>
        <end position="271"/>
    </location>
</feature>
<feature type="helix" evidence="20">
    <location>
        <begin position="287"/>
        <end position="298"/>
    </location>
</feature>
<feature type="turn" evidence="20">
    <location>
        <begin position="299"/>
        <end position="302"/>
    </location>
</feature>
<feature type="strand" evidence="20">
    <location>
        <begin position="303"/>
        <end position="319"/>
    </location>
</feature>
<feature type="strand" evidence="19">
    <location>
        <begin position="321"/>
        <end position="325"/>
    </location>
</feature>
<feature type="helix" evidence="20">
    <location>
        <begin position="330"/>
        <end position="347"/>
    </location>
</feature>
<feature type="strand" evidence="21">
    <location>
        <begin position="348"/>
        <end position="350"/>
    </location>
</feature>
<feature type="strand" evidence="20">
    <location>
        <begin position="354"/>
        <end position="358"/>
    </location>
</feature>
<feature type="turn" evidence="20">
    <location>
        <begin position="359"/>
        <end position="362"/>
    </location>
</feature>
<feature type="helix" evidence="20">
    <location>
        <begin position="369"/>
        <end position="374"/>
    </location>
</feature>
<feature type="turn" evidence="20">
    <location>
        <begin position="375"/>
        <end position="377"/>
    </location>
</feature>
<feature type="strand" evidence="20">
    <location>
        <begin position="380"/>
        <end position="387"/>
    </location>
</feature>
<feature type="strand" evidence="20">
    <location>
        <begin position="389"/>
        <end position="392"/>
    </location>
</feature>
<feature type="helix" evidence="18">
    <location>
        <begin position="393"/>
        <end position="395"/>
    </location>
</feature>
<feature type="helix" evidence="20">
    <location>
        <begin position="398"/>
        <end position="400"/>
    </location>
</feature>
<feature type="helix" evidence="20">
    <location>
        <begin position="401"/>
        <end position="422"/>
    </location>
</feature>